<gene>
    <name type="primary">KITLG</name>
    <name type="synonym">SCF</name>
</gene>
<proteinExistence type="evidence at transcript level"/>
<sequence>MKKAQTWIITCFCLQLLLLNPLVKTQSSCGNPVTDDVNDIAKLVGNLPNDYLITLKYVPKMDSLPNHCWLHLMVPEFSRSLHNLLQKFVDISDMSDVLSNYSIINNLTRIINDLMACLAFDKNKDFIKENGHLYEEDRFIPENFFRLFNRTIEVYKEFADSLDKNDCIMPSTVETPENDSRVAVTKTISFPPVAASSLRNDSIGSNTSSNSNKEALGFISSSSLQGISIALTSLLSLLIGFILGVIYWKKTHPKSRPESNETTQCHGCQEENEISMLQQKEKEHLQV</sequence>
<reference key="1">
    <citation type="journal article" date="1996" name="Biochim. Biophys. Acta">
        <title>Cloning and characterization of cDNAs encoding two forms of avian stem cell factor.</title>
        <authorList>
            <person name="Petitte J.N."/>
            <person name="Kulik M.J."/>
        </authorList>
    </citation>
    <scope>NUCLEOTIDE SEQUENCE [GENOMIC DNA / MRNA] (ISOFORMS 1 AND 2)</scope>
</reference>
<keyword id="KW-0025">Alternative splicing</keyword>
<keyword id="KW-0130">Cell adhesion</keyword>
<keyword id="KW-1003">Cell membrane</keyword>
<keyword id="KW-0966">Cell projection</keyword>
<keyword id="KW-0963">Cytoplasm</keyword>
<keyword id="KW-0206">Cytoskeleton</keyword>
<keyword id="KW-1015">Disulfide bond</keyword>
<keyword id="KW-0325">Glycoprotein</keyword>
<keyword id="KW-0339">Growth factor</keyword>
<keyword id="KW-0472">Membrane</keyword>
<keyword id="KW-1185">Reference proteome</keyword>
<keyword id="KW-0964">Secreted</keyword>
<keyword id="KW-0732">Signal</keyword>
<keyword id="KW-0812">Transmembrane</keyword>
<keyword id="KW-1133">Transmembrane helix</keyword>
<protein>
    <recommendedName>
        <fullName>Kit ligand</fullName>
    </recommendedName>
    <alternativeName>
        <fullName>Mast cell growth factor</fullName>
        <shortName>MGF</shortName>
    </alternativeName>
    <alternativeName>
        <fullName>Stem cell factor</fullName>
        <shortName>SCF</shortName>
    </alternativeName>
    <alternativeName>
        <fullName>c-Kit ligand</fullName>
    </alternativeName>
</protein>
<evidence type="ECO:0000250" key="1"/>
<evidence type="ECO:0000250" key="2">
    <source>
        <dbReference type="UniProtKB" id="P21583"/>
    </source>
</evidence>
<evidence type="ECO:0000255" key="3"/>
<evidence type="ECO:0000303" key="4">
    <source>
    </source>
</evidence>
<evidence type="ECO:0000305" key="5"/>
<feature type="signal peptide" evidence="3">
    <location>
        <begin position="1"/>
        <end position="25"/>
    </location>
</feature>
<feature type="chain" id="PRO_0000031920" description="Kit ligand">
    <location>
        <begin position="26"/>
        <end position="287"/>
    </location>
</feature>
<feature type="topological domain" description="Extracellular" evidence="3">
    <location>
        <begin position="26"/>
        <end position="225"/>
    </location>
</feature>
<feature type="transmembrane region" description="Helical" evidence="3">
    <location>
        <begin position="226"/>
        <end position="246"/>
    </location>
</feature>
<feature type="topological domain" description="Cytoplasmic" evidence="3">
    <location>
        <begin position="247"/>
        <end position="287"/>
    </location>
</feature>
<feature type="glycosylation site" description="N-linked (GlcNAc...) asparagine" evidence="3">
    <location>
        <position position="100"/>
    </location>
</feature>
<feature type="glycosylation site" description="N-linked (GlcNAc...) asparagine" evidence="3">
    <location>
        <position position="106"/>
    </location>
</feature>
<feature type="glycosylation site" description="N-linked (GlcNAc...) asparagine" evidence="3">
    <location>
        <position position="149"/>
    </location>
</feature>
<feature type="glycosylation site" description="N-linked (GlcNAc...) asparagine" evidence="3">
    <location>
        <position position="178"/>
    </location>
</feature>
<feature type="glycosylation site" description="N-linked (GlcNAc...) asparagine" evidence="3">
    <location>
        <position position="200"/>
    </location>
</feature>
<feature type="glycosylation site" description="N-linked (GlcNAc...) asparagine" evidence="3">
    <location>
        <position position="206"/>
    </location>
</feature>
<feature type="disulfide bond" evidence="1">
    <location>
        <begin position="29"/>
        <end position="117"/>
    </location>
</feature>
<feature type="disulfide bond" evidence="1">
    <location>
        <begin position="68"/>
        <end position="167"/>
    </location>
</feature>
<feature type="splice variant" id="VSP_006026" description="In isoform 2." evidence="4">
    <original>DSRVAVTKTISFPPVAASSLRNDSIGSNTSSNSNK</original>
    <variation>E</variation>
    <location>
        <begin position="179"/>
        <end position="213"/>
    </location>
</feature>
<organism>
    <name type="scientific">Coturnix japonica</name>
    <name type="common">Japanese quail</name>
    <name type="synonym">Coturnix coturnix japonica</name>
    <dbReference type="NCBI Taxonomy" id="93934"/>
    <lineage>
        <taxon>Eukaryota</taxon>
        <taxon>Metazoa</taxon>
        <taxon>Chordata</taxon>
        <taxon>Craniata</taxon>
        <taxon>Vertebrata</taxon>
        <taxon>Euteleostomi</taxon>
        <taxon>Archelosauria</taxon>
        <taxon>Archosauria</taxon>
        <taxon>Dinosauria</taxon>
        <taxon>Saurischia</taxon>
        <taxon>Theropoda</taxon>
        <taxon>Coelurosauria</taxon>
        <taxon>Aves</taxon>
        <taxon>Neognathae</taxon>
        <taxon>Galloanserae</taxon>
        <taxon>Galliformes</taxon>
        <taxon>Phasianidae</taxon>
        <taxon>Perdicinae</taxon>
        <taxon>Coturnix</taxon>
    </lineage>
</organism>
<accession>Q90314</accession>
<accession>Q90315</accession>
<name>SCF_COTJA</name>
<dbReference type="EMBL" id="U43078">
    <property type="protein sequence ID" value="AAC59933.1"/>
    <property type="molecule type" value="mRNA"/>
</dbReference>
<dbReference type="EMBL" id="U43079">
    <property type="protein sequence ID" value="AAC59934.1"/>
    <property type="molecule type" value="Genomic_DNA"/>
</dbReference>
<dbReference type="PIR" id="S70367">
    <property type="entry name" value="S70367"/>
</dbReference>
<dbReference type="SMR" id="Q90314"/>
<dbReference type="GlyCosmos" id="Q90314">
    <property type="glycosylation" value="6 sites, No reported glycans"/>
</dbReference>
<dbReference type="Proteomes" id="UP000694412">
    <property type="component" value="Unplaced"/>
</dbReference>
<dbReference type="GO" id="GO:0005737">
    <property type="term" value="C:cytoplasm"/>
    <property type="evidence" value="ECO:0000250"/>
    <property type="project" value="UniProtKB"/>
</dbReference>
<dbReference type="GO" id="GO:0005856">
    <property type="term" value="C:cytoskeleton"/>
    <property type="evidence" value="ECO:0007669"/>
    <property type="project" value="UniProtKB-SubCell"/>
</dbReference>
<dbReference type="GO" id="GO:0005576">
    <property type="term" value="C:extracellular region"/>
    <property type="evidence" value="ECO:0007669"/>
    <property type="project" value="UniProtKB-SubCell"/>
</dbReference>
<dbReference type="GO" id="GO:0030175">
    <property type="term" value="C:filopodium"/>
    <property type="evidence" value="ECO:0000250"/>
    <property type="project" value="UniProtKB"/>
</dbReference>
<dbReference type="GO" id="GO:0030027">
    <property type="term" value="C:lamellipodium"/>
    <property type="evidence" value="ECO:0000250"/>
    <property type="project" value="UniProtKB"/>
</dbReference>
<dbReference type="GO" id="GO:0005886">
    <property type="term" value="C:plasma membrane"/>
    <property type="evidence" value="ECO:0000250"/>
    <property type="project" value="UniProtKB"/>
</dbReference>
<dbReference type="GO" id="GO:0005125">
    <property type="term" value="F:cytokine activity"/>
    <property type="evidence" value="ECO:0007669"/>
    <property type="project" value="TreeGrafter"/>
</dbReference>
<dbReference type="GO" id="GO:0008083">
    <property type="term" value="F:growth factor activity"/>
    <property type="evidence" value="ECO:0007669"/>
    <property type="project" value="UniProtKB-KW"/>
</dbReference>
<dbReference type="GO" id="GO:0005173">
    <property type="term" value="F:stem cell factor receptor binding"/>
    <property type="evidence" value="ECO:0007669"/>
    <property type="project" value="InterPro"/>
</dbReference>
<dbReference type="GO" id="GO:0007155">
    <property type="term" value="P:cell adhesion"/>
    <property type="evidence" value="ECO:0007669"/>
    <property type="project" value="UniProtKB-KW"/>
</dbReference>
<dbReference type="GO" id="GO:0008284">
    <property type="term" value="P:positive regulation of cell population proliferation"/>
    <property type="evidence" value="ECO:0007669"/>
    <property type="project" value="TreeGrafter"/>
</dbReference>
<dbReference type="FunFam" id="1.20.1250.10:FF:000004">
    <property type="entry name" value="Kit ligand"/>
    <property type="match status" value="1"/>
</dbReference>
<dbReference type="Gene3D" id="1.20.1250.10">
    <property type="match status" value="1"/>
</dbReference>
<dbReference type="InterPro" id="IPR009079">
    <property type="entry name" value="4_helix_cytokine-like_core"/>
</dbReference>
<dbReference type="InterPro" id="IPR003452">
    <property type="entry name" value="SCF"/>
</dbReference>
<dbReference type="PANTHER" id="PTHR11574">
    <property type="entry name" value="KIT LIGAND"/>
    <property type="match status" value="1"/>
</dbReference>
<dbReference type="PANTHER" id="PTHR11574:SF0">
    <property type="entry name" value="KIT LIGAND"/>
    <property type="match status" value="1"/>
</dbReference>
<dbReference type="Pfam" id="PF02404">
    <property type="entry name" value="SCF"/>
    <property type="match status" value="1"/>
</dbReference>
<dbReference type="PIRSF" id="PIRSF015599">
    <property type="entry name" value="SCF"/>
    <property type="match status" value="1"/>
</dbReference>
<dbReference type="SUPFAM" id="SSF47266">
    <property type="entry name" value="4-helical cytokines"/>
    <property type="match status" value="1"/>
</dbReference>
<comment type="function">
    <text evidence="1">Ligand for the receptor-type protein-tyrosine kinase KIT. Plays an essential role in the regulation of cell survival and proliferation, hematopoiesis, stem cell maintenance, gametogenesis, mast cell development, migration and function, and in melanogenesis. KITLG/SCF binding can activate several signaling pathways. Acts synergistically with other cytokines, probably interleukins (By similarity).</text>
</comment>
<comment type="subunit">
    <text evidence="5">Homodimer, non-covalently linked.</text>
</comment>
<comment type="subcellular location">
    <molecule>Isoform 1</molecule>
    <subcellularLocation>
        <location evidence="1">Cell membrane</location>
        <topology evidence="1">Single-pass type I membrane protein</topology>
    </subcellularLocation>
    <subcellularLocation>
        <location evidence="1">Secreted</location>
    </subcellularLocation>
    <text evidence="1">Also exists as a secreted soluble form (isoform 1 only).</text>
</comment>
<comment type="subcellular location">
    <molecule>Isoform 2</molecule>
    <subcellularLocation>
        <location evidence="2">Cytoplasm</location>
    </subcellularLocation>
    <subcellularLocation>
        <location evidence="1">Cytoplasm</location>
        <location evidence="1">Cytoskeleton</location>
    </subcellularLocation>
    <subcellularLocation>
        <location evidence="2">Cell membrane</location>
        <topology evidence="1">Single-pass type I membrane protein</topology>
    </subcellularLocation>
    <subcellularLocation>
        <location evidence="2">Cell projection</location>
        <location evidence="2">Lamellipodium</location>
    </subcellularLocation>
    <subcellularLocation>
        <location evidence="2">Cell projection</location>
        <location evidence="2">Filopodium</location>
    </subcellularLocation>
</comment>
<comment type="alternative products">
    <event type="alternative splicing"/>
    <isoform>
        <id>Q90314-1</id>
        <name>1</name>
        <sequence type="displayed"/>
    </isoform>
    <isoform>
        <id>Q90314-2</id>
        <name>2</name>
        <sequence type="described" ref="VSP_006026"/>
    </isoform>
</comment>
<comment type="PTM">
    <text>A soluble form is produced by proteolytic processing of isoform 1 in the extracellular domain.</text>
</comment>
<comment type="similarity">
    <text evidence="5">Belongs to the SCF family.</text>
</comment>